<accession>Q04R37</accession>
<reference key="1">
    <citation type="journal article" date="2006" name="Proc. Natl. Acad. Sci. U.S.A.">
        <title>Genome reduction in Leptospira borgpetersenii reflects limited transmission potential.</title>
        <authorList>
            <person name="Bulach D.M."/>
            <person name="Zuerner R.L."/>
            <person name="Wilson P."/>
            <person name="Seemann T."/>
            <person name="McGrath A."/>
            <person name="Cullen P.A."/>
            <person name="Davis J."/>
            <person name="Johnson M."/>
            <person name="Kuczek E."/>
            <person name="Alt D.P."/>
            <person name="Peterson-Burch B."/>
            <person name="Coppel R.L."/>
            <person name="Rood J.I."/>
            <person name="Davies J.K."/>
            <person name="Adler B."/>
        </authorList>
    </citation>
    <scope>NUCLEOTIDE SEQUENCE [LARGE SCALE GENOMIC DNA]</scope>
    <source>
        <strain>JB197</strain>
    </source>
</reference>
<evidence type="ECO:0000255" key="1">
    <source>
        <dbReference type="HAMAP-Rule" id="MF_01629"/>
    </source>
</evidence>
<dbReference type="EC" id="1.4.3.5" evidence="1"/>
<dbReference type="EMBL" id="CP000350">
    <property type="protein sequence ID" value="ABJ76633.1"/>
    <property type="molecule type" value="Genomic_DNA"/>
</dbReference>
<dbReference type="RefSeq" id="WP_011670589.1">
    <property type="nucleotide sequence ID" value="NC_008510.1"/>
</dbReference>
<dbReference type="SMR" id="Q04R37"/>
<dbReference type="KEGG" id="lbj:LBJ_2141"/>
<dbReference type="HOGENOM" id="CLU_032263_2_2_12"/>
<dbReference type="UniPathway" id="UPA01068">
    <property type="reaction ID" value="UER00304"/>
</dbReference>
<dbReference type="UniPathway" id="UPA01068">
    <property type="reaction ID" value="UER00305"/>
</dbReference>
<dbReference type="Proteomes" id="UP000000656">
    <property type="component" value="Chromosome 1"/>
</dbReference>
<dbReference type="GO" id="GO:0010181">
    <property type="term" value="F:FMN binding"/>
    <property type="evidence" value="ECO:0007669"/>
    <property type="project" value="UniProtKB-UniRule"/>
</dbReference>
<dbReference type="GO" id="GO:0004733">
    <property type="term" value="F:pyridoxamine phosphate oxidase activity"/>
    <property type="evidence" value="ECO:0007669"/>
    <property type="project" value="UniProtKB-UniRule"/>
</dbReference>
<dbReference type="GO" id="GO:0008615">
    <property type="term" value="P:pyridoxine biosynthetic process"/>
    <property type="evidence" value="ECO:0007669"/>
    <property type="project" value="UniProtKB-KW"/>
</dbReference>
<dbReference type="FunFam" id="2.30.110.10:FF:000005">
    <property type="entry name" value="NAD(P)H-hydrate epimerase"/>
    <property type="match status" value="1"/>
</dbReference>
<dbReference type="Gene3D" id="2.30.110.10">
    <property type="entry name" value="Electron Transport, Fmn-binding Protein, Chain A"/>
    <property type="match status" value="1"/>
</dbReference>
<dbReference type="HAMAP" id="MF_01629">
    <property type="entry name" value="PdxH"/>
    <property type="match status" value="1"/>
</dbReference>
<dbReference type="InterPro" id="IPR000659">
    <property type="entry name" value="Pyridox_Oxase"/>
</dbReference>
<dbReference type="InterPro" id="IPR019740">
    <property type="entry name" value="Pyridox_Oxase_CS"/>
</dbReference>
<dbReference type="InterPro" id="IPR011576">
    <property type="entry name" value="Pyridox_Oxase_N"/>
</dbReference>
<dbReference type="InterPro" id="IPR019576">
    <property type="entry name" value="Pyridoxamine_oxidase_dimer_C"/>
</dbReference>
<dbReference type="InterPro" id="IPR012349">
    <property type="entry name" value="Split_barrel_FMN-bd"/>
</dbReference>
<dbReference type="NCBIfam" id="TIGR00558">
    <property type="entry name" value="pdxH"/>
    <property type="match status" value="1"/>
</dbReference>
<dbReference type="NCBIfam" id="NF004231">
    <property type="entry name" value="PRK05679.1"/>
    <property type="match status" value="1"/>
</dbReference>
<dbReference type="PANTHER" id="PTHR10851:SF0">
    <property type="entry name" value="PYRIDOXINE-5'-PHOSPHATE OXIDASE"/>
    <property type="match status" value="1"/>
</dbReference>
<dbReference type="PANTHER" id="PTHR10851">
    <property type="entry name" value="PYRIDOXINE-5-PHOSPHATE OXIDASE"/>
    <property type="match status" value="1"/>
</dbReference>
<dbReference type="Pfam" id="PF10590">
    <property type="entry name" value="PNP_phzG_C"/>
    <property type="match status" value="1"/>
</dbReference>
<dbReference type="Pfam" id="PF01243">
    <property type="entry name" value="PNPOx_N"/>
    <property type="match status" value="1"/>
</dbReference>
<dbReference type="PIRSF" id="PIRSF000190">
    <property type="entry name" value="Pyd_amn-ph_oxd"/>
    <property type="match status" value="1"/>
</dbReference>
<dbReference type="SUPFAM" id="SSF50475">
    <property type="entry name" value="FMN-binding split barrel"/>
    <property type="match status" value="1"/>
</dbReference>
<dbReference type="PROSITE" id="PS01064">
    <property type="entry name" value="PYRIDOX_OXIDASE"/>
    <property type="match status" value="1"/>
</dbReference>
<name>PDXH_LEPBJ</name>
<feature type="chain" id="PRO_0000292299" description="Pyridoxine/pyridoxamine 5'-phosphate oxidase">
    <location>
        <begin position="1"/>
        <end position="214"/>
    </location>
</feature>
<feature type="binding site" evidence="1">
    <location>
        <begin position="9"/>
        <end position="12"/>
    </location>
    <ligand>
        <name>substrate</name>
    </ligand>
</feature>
<feature type="binding site" evidence="1">
    <location>
        <begin position="62"/>
        <end position="67"/>
    </location>
    <ligand>
        <name>FMN</name>
        <dbReference type="ChEBI" id="CHEBI:58210"/>
    </ligand>
</feature>
<feature type="binding site" evidence="1">
    <location>
        <position position="67"/>
    </location>
    <ligand>
        <name>substrate</name>
    </ligand>
</feature>
<feature type="binding site" evidence="1">
    <location>
        <begin position="77"/>
        <end position="78"/>
    </location>
    <ligand>
        <name>FMN</name>
        <dbReference type="ChEBI" id="CHEBI:58210"/>
    </ligand>
</feature>
<feature type="binding site" evidence="1">
    <location>
        <position position="83"/>
    </location>
    <ligand>
        <name>FMN</name>
        <dbReference type="ChEBI" id="CHEBI:58210"/>
    </ligand>
</feature>
<feature type="binding site" evidence="1">
    <location>
        <position position="84"/>
    </location>
    <ligand>
        <name>FMN</name>
        <dbReference type="ChEBI" id="CHEBI:58210"/>
    </ligand>
</feature>
<feature type="binding site" evidence="1">
    <location>
        <position position="106"/>
    </location>
    <ligand>
        <name>FMN</name>
        <dbReference type="ChEBI" id="CHEBI:58210"/>
    </ligand>
</feature>
<feature type="binding site" evidence="1">
    <location>
        <position position="124"/>
    </location>
    <ligand>
        <name>substrate</name>
    </ligand>
</feature>
<feature type="binding site" evidence="1">
    <location>
        <position position="128"/>
    </location>
    <ligand>
        <name>substrate</name>
    </ligand>
</feature>
<feature type="binding site" evidence="1">
    <location>
        <position position="132"/>
    </location>
    <ligand>
        <name>substrate</name>
    </ligand>
</feature>
<feature type="binding site" evidence="1">
    <location>
        <begin position="141"/>
        <end position="142"/>
    </location>
    <ligand>
        <name>FMN</name>
        <dbReference type="ChEBI" id="CHEBI:58210"/>
    </ligand>
</feature>
<feature type="binding site" evidence="1">
    <location>
        <position position="186"/>
    </location>
    <ligand>
        <name>FMN</name>
        <dbReference type="ChEBI" id="CHEBI:58210"/>
    </ligand>
</feature>
<feature type="binding site" evidence="1">
    <location>
        <begin position="192"/>
        <end position="194"/>
    </location>
    <ligand>
        <name>substrate</name>
    </ligand>
</feature>
<feature type="binding site" evidence="1">
    <location>
        <position position="196"/>
    </location>
    <ligand>
        <name>FMN</name>
        <dbReference type="ChEBI" id="CHEBI:58210"/>
    </ligand>
</feature>
<gene>
    <name evidence="1" type="primary">pdxH</name>
    <name type="ordered locus">LBJ_2141</name>
</gene>
<comment type="function">
    <text evidence="1">Catalyzes the oxidation of either pyridoxine 5'-phosphate (PNP) or pyridoxamine 5'-phosphate (PMP) into pyridoxal 5'-phosphate (PLP).</text>
</comment>
<comment type="catalytic activity">
    <reaction evidence="1">
        <text>pyridoxamine 5'-phosphate + O2 + H2O = pyridoxal 5'-phosphate + H2O2 + NH4(+)</text>
        <dbReference type="Rhea" id="RHEA:15817"/>
        <dbReference type="ChEBI" id="CHEBI:15377"/>
        <dbReference type="ChEBI" id="CHEBI:15379"/>
        <dbReference type="ChEBI" id="CHEBI:16240"/>
        <dbReference type="ChEBI" id="CHEBI:28938"/>
        <dbReference type="ChEBI" id="CHEBI:58451"/>
        <dbReference type="ChEBI" id="CHEBI:597326"/>
        <dbReference type="EC" id="1.4.3.5"/>
    </reaction>
</comment>
<comment type="catalytic activity">
    <reaction evidence="1">
        <text>pyridoxine 5'-phosphate + O2 = pyridoxal 5'-phosphate + H2O2</text>
        <dbReference type="Rhea" id="RHEA:15149"/>
        <dbReference type="ChEBI" id="CHEBI:15379"/>
        <dbReference type="ChEBI" id="CHEBI:16240"/>
        <dbReference type="ChEBI" id="CHEBI:58589"/>
        <dbReference type="ChEBI" id="CHEBI:597326"/>
        <dbReference type="EC" id="1.4.3.5"/>
    </reaction>
</comment>
<comment type="cofactor">
    <cofactor evidence="1">
        <name>FMN</name>
        <dbReference type="ChEBI" id="CHEBI:58210"/>
    </cofactor>
    <text evidence="1">Binds 1 FMN per subunit.</text>
</comment>
<comment type="pathway">
    <text evidence="1">Cofactor metabolism; pyridoxal 5'-phosphate salvage; pyridoxal 5'-phosphate from pyridoxamine 5'-phosphate: step 1/1.</text>
</comment>
<comment type="pathway">
    <text evidence="1">Cofactor metabolism; pyridoxal 5'-phosphate salvage; pyridoxal 5'-phosphate from pyridoxine 5'-phosphate: step 1/1.</text>
</comment>
<comment type="subunit">
    <text evidence="1">Homodimer.</text>
</comment>
<comment type="similarity">
    <text evidence="1">Belongs to the pyridoxamine 5'-phosphate oxidase family.</text>
</comment>
<protein>
    <recommendedName>
        <fullName evidence="1">Pyridoxine/pyridoxamine 5'-phosphate oxidase</fullName>
        <ecNumber evidence="1">1.4.3.5</ecNumber>
    </recommendedName>
    <alternativeName>
        <fullName evidence="1">PNP/PMP oxidase</fullName>
        <shortName evidence="1">PNPOx</shortName>
    </alternativeName>
    <alternativeName>
        <fullName evidence="1">Pyridoxal 5'-phosphate synthase</fullName>
    </alternativeName>
</protein>
<organism>
    <name type="scientific">Leptospira borgpetersenii serovar Hardjo-bovis (strain JB197)</name>
    <dbReference type="NCBI Taxonomy" id="355277"/>
    <lineage>
        <taxon>Bacteria</taxon>
        <taxon>Pseudomonadati</taxon>
        <taxon>Spirochaetota</taxon>
        <taxon>Spirochaetia</taxon>
        <taxon>Leptospirales</taxon>
        <taxon>Leptospiraceae</taxon>
        <taxon>Leptospira</taxon>
    </lineage>
</organism>
<keyword id="KW-0285">Flavoprotein</keyword>
<keyword id="KW-0288">FMN</keyword>
<keyword id="KW-0560">Oxidoreductase</keyword>
<keyword id="KW-0664">Pyridoxine biosynthesis</keyword>
<sequence length="214" mass="24950">MNSKISEIRKNYSLSSLDIGDIGDDPISFFQKWFEEAVLSEVLEVNAMTLATATKDGKPNARIVLLKEILEDSFVFYTNYESKKGRELEENPRACLVFFWSELERQVRIEGGVKKVSREESNVYFHSRPRGSQIGAVVSPQSYEIPNRKFLEERFEEFSKLYEGKEVDLPNHWGGYAVHPNRIEFWQGRSSRLHDRIVFEKDTDSSWKKFRVAP</sequence>
<proteinExistence type="inferred from homology"/>